<accession>Q9KKF1</accession>
<evidence type="ECO:0000255" key="1">
    <source>
        <dbReference type="HAMAP-Rule" id="MF_00580"/>
    </source>
</evidence>
<gene>
    <name evidence="1" type="primary">groES</name>
    <name evidence="1" type="synonym">groS</name>
</gene>
<proteinExistence type="inferred from homology"/>
<protein>
    <recommendedName>
        <fullName evidence="1">Co-chaperonin GroES</fullName>
    </recommendedName>
    <alternativeName>
        <fullName evidence="1">10 kDa chaperonin</fullName>
    </alternativeName>
    <alternativeName>
        <fullName evidence="1">Chaperonin-10</fullName>
        <shortName evidence="1">Cpn10</shortName>
    </alternativeName>
</protein>
<comment type="function">
    <text evidence="1">Together with the chaperonin GroEL, plays an essential role in assisting protein folding. The GroEL-GroES system forms a nano-cage that allows encapsulation of the non-native substrate proteins and provides a physical environment optimized to promote and accelerate protein folding. GroES binds to the apical surface of the GroEL ring, thereby capping the opening of the GroEL channel.</text>
</comment>
<comment type="subunit">
    <text evidence="1">Heptamer of 7 subunits arranged in a ring. Interacts with the chaperonin GroEL.</text>
</comment>
<comment type="subcellular location">
    <subcellularLocation>
        <location evidence="1">Cytoplasm</location>
    </subcellularLocation>
</comment>
<comment type="similarity">
    <text evidence="1">Belongs to the GroES chaperonin family.</text>
</comment>
<keyword id="KW-0143">Chaperone</keyword>
<keyword id="KW-0963">Cytoplasm</keyword>
<dbReference type="EMBL" id="AF080547">
    <property type="protein sequence ID" value="AAF73983.1"/>
    <property type="molecule type" value="Genomic_DNA"/>
</dbReference>
<dbReference type="SMR" id="Q9KKF1"/>
<dbReference type="GO" id="GO:0005737">
    <property type="term" value="C:cytoplasm"/>
    <property type="evidence" value="ECO:0007669"/>
    <property type="project" value="UniProtKB-SubCell"/>
</dbReference>
<dbReference type="GO" id="GO:0005524">
    <property type="term" value="F:ATP binding"/>
    <property type="evidence" value="ECO:0007669"/>
    <property type="project" value="InterPro"/>
</dbReference>
<dbReference type="GO" id="GO:0046872">
    <property type="term" value="F:metal ion binding"/>
    <property type="evidence" value="ECO:0007669"/>
    <property type="project" value="TreeGrafter"/>
</dbReference>
<dbReference type="GO" id="GO:0044183">
    <property type="term" value="F:protein folding chaperone"/>
    <property type="evidence" value="ECO:0007669"/>
    <property type="project" value="InterPro"/>
</dbReference>
<dbReference type="GO" id="GO:0051087">
    <property type="term" value="F:protein-folding chaperone binding"/>
    <property type="evidence" value="ECO:0007669"/>
    <property type="project" value="TreeGrafter"/>
</dbReference>
<dbReference type="GO" id="GO:0051082">
    <property type="term" value="F:unfolded protein binding"/>
    <property type="evidence" value="ECO:0007669"/>
    <property type="project" value="TreeGrafter"/>
</dbReference>
<dbReference type="GO" id="GO:0051085">
    <property type="term" value="P:chaperone cofactor-dependent protein refolding"/>
    <property type="evidence" value="ECO:0007669"/>
    <property type="project" value="TreeGrafter"/>
</dbReference>
<dbReference type="CDD" id="cd00320">
    <property type="entry name" value="cpn10"/>
    <property type="match status" value="1"/>
</dbReference>
<dbReference type="FunFam" id="2.30.33.40:FF:000001">
    <property type="entry name" value="10 kDa chaperonin"/>
    <property type="match status" value="1"/>
</dbReference>
<dbReference type="Gene3D" id="2.30.33.40">
    <property type="entry name" value="GroES chaperonin"/>
    <property type="match status" value="1"/>
</dbReference>
<dbReference type="HAMAP" id="MF_00580">
    <property type="entry name" value="CH10"/>
    <property type="match status" value="1"/>
</dbReference>
<dbReference type="InterPro" id="IPR020818">
    <property type="entry name" value="Chaperonin_GroES"/>
</dbReference>
<dbReference type="InterPro" id="IPR037124">
    <property type="entry name" value="Chaperonin_GroES_sf"/>
</dbReference>
<dbReference type="InterPro" id="IPR011032">
    <property type="entry name" value="GroES-like_sf"/>
</dbReference>
<dbReference type="NCBIfam" id="NF001531">
    <property type="entry name" value="PRK00364.2-2"/>
    <property type="match status" value="1"/>
</dbReference>
<dbReference type="NCBIfam" id="NF001533">
    <property type="entry name" value="PRK00364.2-4"/>
    <property type="match status" value="1"/>
</dbReference>
<dbReference type="PANTHER" id="PTHR10772">
    <property type="entry name" value="10 KDA HEAT SHOCK PROTEIN"/>
    <property type="match status" value="1"/>
</dbReference>
<dbReference type="PANTHER" id="PTHR10772:SF58">
    <property type="entry name" value="CO-CHAPERONIN GROES"/>
    <property type="match status" value="1"/>
</dbReference>
<dbReference type="Pfam" id="PF00166">
    <property type="entry name" value="Cpn10"/>
    <property type="match status" value="1"/>
</dbReference>
<dbReference type="PRINTS" id="PR00297">
    <property type="entry name" value="CHAPERONIN10"/>
</dbReference>
<dbReference type="SMART" id="SM00883">
    <property type="entry name" value="Cpn10"/>
    <property type="match status" value="1"/>
</dbReference>
<dbReference type="SUPFAM" id="SSF50129">
    <property type="entry name" value="GroES-like"/>
    <property type="match status" value="1"/>
</dbReference>
<reference key="1">
    <citation type="journal article" date="2001" name="Microbiology">
        <title>GroEL (Hsp60) of Clostridium difficile is involved in cell adherence.</title>
        <authorList>
            <person name="Hennequin C."/>
            <person name="Porcheray F."/>
            <person name="Waligora-Dupriet A.-J."/>
            <person name="Collignon A."/>
            <person name="Barc M.-C."/>
            <person name="Bourlioux P."/>
            <person name="Karjalainen T."/>
        </authorList>
    </citation>
    <scope>NUCLEOTIDE SEQUENCE [GENOMIC DNA]</scope>
    <source>
        <strain>79-685</strain>
    </source>
</reference>
<organism>
    <name type="scientific">Clostridioides difficile</name>
    <name type="common">Peptoclostridium difficile</name>
    <dbReference type="NCBI Taxonomy" id="1496"/>
    <lineage>
        <taxon>Bacteria</taxon>
        <taxon>Bacillati</taxon>
        <taxon>Bacillota</taxon>
        <taxon>Clostridia</taxon>
        <taxon>Peptostreptococcales</taxon>
        <taxon>Peptostreptococcaceae</taxon>
        <taxon>Clostridioides</taxon>
    </lineage>
</organism>
<sequence>MNIKPFGDRVVIKKVEAEEKTASGIVLPGAAKEQPQIAEVVEVGPGGIVEGKEIKMELTVGDKVIFQKYSGTEVKIEGQEYTILRQSDVLAVIE</sequence>
<name>CH10_CLODI</name>
<feature type="chain" id="PRO_0000174736" description="Co-chaperonin GroES">
    <location>
        <begin position="1"/>
        <end position="94"/>
    </location>
</feature>